<protein>
    <recommendedName>
        <fullName>RNA polymerase sigma-E factor</fullName>
    </recommendedName>
    <alternativeName>
        <fullName>P31</fullName>
    </alternativeName>
    <alternativeName>
        <fullName>Sigma-29</fullName>
    </alternativeName>
    <alternativeName>
        <fullName>Stage II sporulation protein GB</fullName>
    </alternativeName>
</protein>
<sequence>MKKLKLRLTHLWYKLLMKLGLKSDEVYYIGGSEALPPPLSKDEEQVLLMKLPNGDQAARAILIERNLRLVVYIARKFENTGINIEDLISIGTIGLIKAVNTFNPEKKIKLATYASRCIENEILMYLRRNNKIRSEVSFDEPLNIDWDGNELLLSDVLGTDDDIITKDIEANVDKKLLKKALEQLNEREKQIMELRFGLVGEEEKTQKDVADMMGISQSYISRLEKRIIKRLRKEFNKMV</sequence>
<evidence type="ECO:0000250" key="1"/>
<evidence type="ECO:0000269" key="2">
    <source>
    </source>
</evidence>
<evidence type="ECO:0000305" key="3"/>
<evidence type="ECO:0007829" key="4">
    <source>
        <dbReference type="PDB" id="8B3Z"/>
    </source>
</evidence>
<organism>
    <name type="scientific">Bacillus subtilis (strain 168)</name>
    <dbReference type="NCBI Taxonomy" id="224308"/>
    <lineage>
        <taxon>Bacteria</taxon>
        <taxon>Bacillati</taxon>
        <taxon>Bacillota</taxon>
        <taxon>Bacilli</taxon>
        <taxon>Bacillales</taxon>
        <taxon>Bacillaceae</taxon>
        <taxon>Bacillus</taxon>
    </lineage>
</organism>
<comment type="function">
    <text>Sigma factors are initiation factors that promote the attachment of RNA polymerase to specific initiation sites and are then released. This sigma factor is responsible for the expression of sporulation specific genes.</text>
</comment>
<comment type="PTM">
    <text>Proteolytically cleaved in the N-terminus by SpoIIGA to yield the active peptide.</text>
</comment>
<comment type="similarity">
    <text evidence="3">Belongs to the sigma-70 factor family.</text>
</comment>
<reference key="1">
    <citation type="journal article" date="1984" name="Nature">
        <title>A developmental gene product of Bacillus subtilis homologous to the sigma factor of Escherichia coli.</title>
        <authorList>
            <person name="Stragier P."/>
            <person name="Bouvier J."/>
            <person name="Bonamy C."/>
            <person name="Szulmajster J."/>
        </authorList>
    </citation>
    <scope>NUCLEOTIDE SEQUENCE [GENOMIC DNA]</scope>
</reference>
<reference key="2">
    <citation type="book" date="1985" name="Molecular biology of microbial differentiation">
        <title>Cloning, amplification, and characterization of sporulation genes, especially spoIIG, of Bacillus subtilis.</title>
        <editorList>
            <person name="Setlow P."/>
        </editorList>
        <authorList>
            <person name="Kobayashi Y."/>
            <person name="Anaguchi H."/>
        </authorList>
    </citation>
    <scope>NUCLEOTIDE SEQUENCE [GENOMIC DNA]</scope>
</reference>
<reference key="3">
    <citation type="journal article" date="1997" name="Nature">
        <title>The complete genome sequence of the Gram-positive bacterium Bacillus subtilis.</title>
        <authorList>
            <person name="Kunst F."/>
            <person name="Ogasawara N."/>
            <person name="Moszer I."/>
            <person name="Albertini A.M."/>
            <person name="Alloni G."/>
            <person name="Azevedo V."/>
            <person name="Bertero M.G."/>
            <person name="Bessieres P."/>
            <person name="Bolotin A."/>
            <person name="Borchert S."/>
            <person name="Borriss R."/>
            <person name="Boursier L."/>
            <person name="Brans A."/>
            <person name="Braun M."/>
            <person name="Brignell S.C."/>
            <person name="Bron S."/>
            <person name="Brouillet S."/>
            <person name="Bruschi C.V."/>
            <person name="Caldwell B."/>
            <person name="Capuano V."/>
            <person name="Carter N.M."/>
            <person name="Choi S.-K."/>
            <person name="Codani J.-J."/>
            <person name="Connerton I.F."/>
            <person name="Cummings N.J."/>
            <person name="Daniel R.A."/>
            <person name="Denizot F."/>
            <person name="Devine K.M."/>
            <person name="Duesterhoeft A."/>
            <person name="Ehrlich S.D."/>
            <person name="Emmerson P.T."/>
            <person name="Entian K.-D."/>
            <person name="Errington J."/>
            <person name="Fabret C."/>
            <person name="Ferrari E."/>
            <person name="Foulger D."/>
            <person name="Fritz C."/>
            <person name="Fujita M."/>
            <person name="Fujita Y."/>
            <person name="Fuma S."/>
            <person name="Galizzi A."/>
            <person name="Galleron N."/>
            <person name="Ghim S.-Y."/>
            <person name="Glaser P."/>
            <person name="Goffeau A."/>
            <person name="Golightly E.J."/>
            <person name="Grandi G."/>
            <person name="Guiseppi G."/>
            <person name="Guy B.J."/>
            <person name="Haga K."/>
            <person name="Haiech J."/>
            <person name="Harwood C.R."/>
            <person name="Henaut A."/>
            <person name="Hilbert H."/>
            <person name="Holsappel S."/>
            <person name="Hosono S."/>
            <person name="Hullo M.-F."/>
            <person name="Itaya M."/>
            <person name="Jones L.-M."/>
            <person name="Joris B."/>
            <person name="Karamata D."/>
            <person name="Kasahara Y."/>
            <person name="Klaerr-Blanchard M."/>
            <person name="Klein C."/>
            <person name="Kobayashi Y."/>
            <person name="Koetter P."/>
            <person name="Koningstein G."/>
            <person name="Krogh S."/>
            <person name="Kumano M."/>
            <person name="Kurita K."/>
            <person name="Lapidus A."/>
            <person name="Lardinois S."/>
            <person name="Lauber J."/>
            <person name="Lazarevic V."/>
            <person name="Lee S.-M."/>
            <person name="Levine A."/>
            <person name="Liu H."/>
            <person name="Masuda S."/>
            <person name="Mauel C."/>
            <person name="Medigue C."/>
            <person name="Medina N."/>
            <person name="Mellado R.P."/>
            <person name="Mizuno M."/>
            <person name="Moestl D."/>
            <person name="Nakai S."/>
            <person name="Noback M."/>
            <person name="Noone D."/>
            <person name="O'Reilly M."/>
            <person name="Ogawa K."/>
            <person name="Ogiwara A."/>
            <person name="Oudega B."/>
            <person name="Park S.-H."/>
            <person name="Parro V."/>
            <person name="Pohl T.M."/>
            <person name="Portetelle D."/>
            <person name="Porwollik S."/>
            <person name="Prescott A.M."/>
            <person name="Presecan E."/>
            <person name="Pujic P."/>
            <person name="Purnelle B."/>
            <person name="Rapoport G."/>
            <person name="Rey M."/>
            <person name="Reynolds S."/>
            <person name="Rieger M."/>
            <person name="Rivolta C."/>
            <person name="Rocha E."/>
            <person name="Roche B."/>
            <person name="Rose M."/>
            <person name="Sadaie Y."/>
            <person name="Sato T."/>
            <person name="Scanlan E."/>
            <person name="Schleich S."/>
            <person name="Schroeter R."/>
            <person name="Scoffone F."/>
            <person name="Sekiguchi J."/>
            <person name="Sekowska A."/>
            <person name="Seror S.J."/>
            <person name="Serror P."/>
            <person name="Shin B.-S."/>
            <person name="Soldo B."/>
            <person name="Sorokin A."/>
            <person name="Tacconi E."/>
            <person name="Takagi T."/>
            <person name="Takahashi H."/>
            <person name="Takemaru K."/>
            <person name="Takeuchi M."/>
            <person name="Tamakoshi A."/>
            <person name="Tanaka T."/>
            <person name="Terpstra P."/>
            <person name="Tognoni A."/>
            <person name="Tosato V."/>
            <person name="Uchiyama S."/>
            <person name="Vandenbol M."/>
            <person name="Vannier F."/>
            <person name="Vassarotti A."/>
            <person name="Viari A."/>
            <person name="Wambutt R."/>
            <person name="Wedler E."/>
            <person name="Wedler H."/>
            <person name="Weitzenegger T."/>
            <person name="Winters P."/>
            <person name="Wipat A."/>
            <person name="Yamamoto H."/>
            <person name="Yamane K."/>
            <person name="Yasumoto K."/>
            <person name="Yata K."/>
            <person name="Yoshida K."/>
            <person name="Yoshikawa H.-F."/>
            <person name="Zumstein E."/>
            <person name="Yoshikawa H."/>
            <person name="Danchin A."/>
        </authorList>
    </citation>
    <scope>NUCLEOTIDE SEQUENCE [LARGE SCALE GENOMIC DNA]</scope>
    <source>
        <strain>168</strain>
    </source>
</reference>
<reference key="4">
    <citation type="journal article" date="2009" name="Microbiology">
        <title>From a consortium sequence to a unified sequence: the Bacillus subtilis 168 reference genome a decade later.</title>
        <authorList>
            <person name="Barbe V."/>
            <person name="Cruveiller S."/>
            <person name="Kunst F."/>
            <person name="Lenoble P."/>
            <person name="Meurice G."/>
            <person name="Sekowska A."/>
            <person name="Vallenet D."/>
            <person name="Wang T."/>
            <person name="Moszer I."/>
            <person name="Medigue C."/>
            <person name="Danchin A."/>
        </authorList>
    </citation>
    <scope>SEQUENCE REVISION TO 66 AND 139</scope>
</reference>
<reference key="5">
    <citation type="journal article" date="1987" name="Proc. Natl. Acad. Sci. U.S.A.">
        <title>Sporulation-specific sigma factor sigma 29 of Bacillus subtilis is synthesized from a precursor protein, P31.</title>
        <authorList>
            <person name="Labell T.L."/>
            <person name="Trempy J.E."/>
            <person name="Haldenwang W.G."/>
        </authorList>
    </citation>
    <scope>IDENTIFICATION OF MATURE SIGMA FACTOR</scope>
    <scope>PROTEIN SEQUENCE OF 30-36</scope>
</reference>
<reference key="6">
    <citation type="journal article" date="1990" name="Nucleic Acids Res.">
        <title>Nucleotide sequence of the sporulation gene spoIIGA from Bacillus subtilis.</title>
        <authorList>
            <person name="Masuda E.S."/>
            <person name="Anaguchi H."/>
            <person name="Sato T."/>
            <person name="Takeuchi M."/>
            <person name="Kobayashi Y."/>
        </authorList>
    </citation>
    <scope>NUCLEOTIDE SEQUENCE [GENOMIC DNA] OF 1-55</scope>
    <source>
        <strain>168</strain>
    </source>
</reference>
<feature type="propeptide" id="PRO_0000032580" description="Removed by SpoIIGA" evidence="2">
    <location>
        <begin position="1"/>
        <end position="29"/>
    </location>
</feature>
<feature type="chain" id="PRO_0000032581" description="RNA polymerase sigma-E factor">
    <location>
        <begin position="30"/>
        <end position="239"/>
    </location>
</feature>
<feature type="DNA-binding region" description="H-T-H motif" evidence="1">
    <location>
        <begin position="206"/>
        <end position="225"/>
    </location>
</feature>
<feature type="short sequence motif" description="Polymerase core binding">
    <location>
        <begin position="86"/>
        <end position="99"/>
    </location>
</feature>
<feature type="sequence conflict" description="In Ref. 2; AAA22794." evidence="3" ref="2">
    <original>N</original>
    <variation>I</variation>
    <location>
        <position position="66"/>
    </location>
</feature>
<feature type="sequence conflict" description="In Ref. 2; AAA22794." evidence="3" ref="2">
    <original>D</original>
    <variation>Y</variation>
    <location>
        <position position="139"/>
    </location>
</feature>
<feature type="helix" evidence="4">
    <location>
        <begin position="54"/>
        <end position="65"/>
    </location>
</feature>
<feature type="helix" evidence="4">
    <location>
        <begin position="67"/>
        <end position="77"/>
    </location>
</feature>
<feature type="helix" evidence="4">
    <location>
        <begin position="84"/>
        <end position="101"/>
    </location>
</feature>
<feature type="helix" evidence="4">
    <location>
        <begin position="110"/>
        <end position="128"/>
    </location>
</feature>
<proteinExistence type="evidence at protein level"/>
<dbReference type="EMBL" id="X01180">
    <property type="protein sequence ID" value="CAA25620.1"/>
    <property type="molecule type" value="Genomic_DNA"/>
</dbReference>
<dbReference type="EMBL" id="M57606">
    <property type="protein sequence ID" value="AAA22794.1"/>
    <property type="molecule type" value="Genomic_DNA"/>
</dbReference>
<dbReference type="EMBL" id="AL009126">
    <property type="protein sequence ID" value="CAB13406.2"/>
    <property type="molecule type" value="Genomic_DNA"/>
</dbReference>
<dbReference type="EMBL" id="M15804">
    <property type="protein sequence ID" value="AAA72566.1"/>
    <property type="status" value="ALT_SEQ"/>
    <property type="molecule type" value="Genomic_DNA"/>
</dbReference>
<dbReference type="EMBL" id="X17344">
    <property type="protein sequence ID" value="CAA35226.1"/>
    <property type="molecule type" value="Genomic_DNA"/>
</dbReference>
<dbReference type="PIR" id="S07337">
    <property type="entry name" value="JU0083"/>
</dbReference>
<dbReference type="RefSeq" id="NP_389415.2">
    <property type="nucleotide sequence ID" value="NC_000964.3"/>
</dbReference>
<dbReference type="RefSeq" id="WP_003221446.1">
    <property type="nucleotide sequence ID" value="NZ_OZ025638.1"/>
</dbReference>
<dbReference type="PDB" id="8B3Z">
    <property type="method" value="X-ray"/>
    <property type="resolution" value="2.38 A"/>
    <property type="chains" value="A/B/C/D/E/F=52-133"/>
</dbReference>
<dbReference type="PDBsum" id="8B3Z"/>
<dbReference type="SMR" id="P06222"/>
<dbReference type="FunCoup" id="P06222">
    <property type="interactions" value="14"/>
</dbReference>
<dbReference type="STRING" id="224308.BSU15320"/>
<dbReference type="PaxDb" id="224308-BSU15320"/>
<dbReference type="EnsemblBacteria" id="CAB13406">
    <property type="protein sequence ID" value="CAB13406"/>
    <property type="gene ID" value="BSU_15320"/>
</dbReference>
<dbReference type="GeneID" id="86873959"/>
<dbReference type="GeneID" id="939683"/>
<dbReference type="KEGG" id="bsu:BSU15320"/>
<dbReference type="PATRIC" id="fig|224308.179.peg.1670"/>
<dbReference type="eggNOG" id="COG1191">
    <property type="taxonomic scope" value="Bacteria"/>
</dbReference>
<dbReference type="InParanoid" id="P06222"/>
<dbReference type="OrthoDB" id="9809557at2"/>
<dbReference type="PhylomeDB" id="P06222"/>
<dbReference type="BioCyc" id="BSUB:BSU15320-MONOMER"/>
<dbReference type="PRO" id="PR:P06222"/>
<dbReference type="Proteomes" id="UP000001570">
    <property type="component" value="Chromosome"/>
</dbReference>
<dbReference type="GO" id="GO:0003677">
    <property type="term" value="F:DNA binding"/>
    <property type="evidence" value="ECO:0007669"/>
    <property type="project" value="UniProtKB-KW"/>
</dbReference>
<dbReference type="GO" id="GO:0016987">
    <property type="term" value="F:sigma factor activity"/>
    <property type="evidence" value="ECO:0007669"/>
    <property type="project" value="UniProtKB-KW"/>
</dbReference>
<dbReference type="GO" id="GO:0006352">
    <property type="term" value="P:DNA-templated transcription initiation"/>
    <property type="evidence" value="ECO:0007669"/>
    <property type="project" value="InterPro"/>
</dbReference>
<dbReference type="GO" id="GO:0030435">
    <property type="term" value="P:sporulation resulting in formation of a cellular spore"/>
    <property type="evidence" value="ECO:0007669"/>
    <property type="project" value="UniProtKB-KW"/>
</dbReference>
<dbReference type="CDD" id="cd06171">
    <property type="entry name" value="Sigma70_r4"/>
    <property type="match status" value="1"/>
</dbReference>
<dbReference type="FunFam" id="1.10.10.10:FF:000202">
    <property type="entry name" value="RNA polymerase sigma factor"/>
    <property type="match status" value="1"/>
</dbReference>
<dbReference type="FunFam" id="1.20.120.1810:FF:000003">
    <property type="entry name" value="RNA polymerase sigma factor"/>
    <property type="match status" value="1"/>
</dbReference>
<dbReference type="Gene3D" id="1.20.120.1810">
    <property type="match status" value="1"/>
</dbReference>
<dbReference type="Gene3D" id="1.10.10.10">
    <property type="entry name" value="Winged helix-like DNA-binding domain superfamily/Winged helix DNA-binding domain"/>
    <property type="match status" value="1"/>
</dbReference>
<dbReference type="InterPro" id="IPR001387">
    <property type="entry name" value="Cro/C1-type_HTH"/>
</dbReference>
<dbReference type="InterPro" id="IPR014284">
    <property type="entry name" value="RNA_pol_sigma-70_dom"/>
</dbReference>
<dbReference type="InterPro" id="IPR014200">
    <property type="entry name" value="RNA_pol_sigma-E"/>
</dbReference>
<dbReference type="InterPro" id="IPR000943">
    <property type="entry name" value="RNA_pol_sigma70"/>
</dbReference>
<dbReference type="InterPro" id="IPR007627">
    <property type="entry name" value="RNA_pol_sigma70_r2"/>
</dbReference>
<dbReference type="InterPro" id="IPR007630">
    <property type="entry name" value="RNA_pol_sigma70_r4"/>
</dbReference>
<dbReference type="InterPro" id="IPR013325">
    <property type="entry name" value="RNA_pol_sigma_r2"/>
</dbReference>
<dbReference type="InterPro" id="IPR013324">
    <property type="entry name" value="RNA_pol_sigma_r3/r4-like"/>
</dbReference>
<dbReference type="InterPro" id="IPR050813">
    <property type="entry name" value="Sigma-70_Factor"/>
</dbReference>
<dbReference type="InterPro" id="IPR036388">
    <property type="entry name" value="WH-like_DNA-bd_sf"/>
</dbReference>
<dbReference type="NCBIfam" id="NF004471">
    <property type="entry name" value="PRK05803.1"/>
    <property type="match status" value="1"/>
</dbReference>
<dbReference type="NCBIfam" id="NF006158">
    <property type="entry name" value="PRK08301.1"/>
    <property type="match status" value="1"/>
</dbReference>
<dbReference type="NCBIfam" id="TIGR02937">
    <property type="entry name" value="sigma70-ECF"/>
    <property type="match status" value="1"/>
</dbReference>
<dbReference type="NCBIfam" id="TIGR02835">
    <property type="entry name" value="spore_sigmaE"/>
    <property type="match status" value="1"/>
</dbReference>
<dbReference type="PANTHER" id="PTHR30376:SF3">
    <property type="entry name" value="RNA POLYMERASE SIGMA FACTOR RPOH"/>
    <property type="match status" value="1"/>
</dbReference>
<dbReference type="PANTHER" id="PTHR30376">
    <property type="entry name" value="SIGMA FACTOR RPOH HEAT SHOCK RELATED"/>
    <property type="match status" value="1"/>
</dbReference>
<dbReference type="Pfam" id="PF04542">
    <property type="entry name" value="Sigma70_r2"/>
    <property type="match status" value="1"/>
</dbReference>
<dbReference type="Pfam" id="PF04545">
    <property type="entry name" value="Sigma70_r4"/>
    <property type="match status" value="1"/>
</dbReference>
<dbReference type="PIRSF" id="PIRSF000770">
    <property type="entry name" value="RNA_pol_sigma-SigE/K"/>
    <property type="match status" value="1"/>
</dbReference>
<dbReference type="PRINTS" id="PR00046">
    <property type="entry name" value="SIGMA70FCT"/>
</dbReference>
<dbReference type="SUPFAM" id="SSF88946">
    <property type="entry name" value="Sigma2 domain of RNA polymerase sigma factors"/>
    <property type="match status" value="1"/>
</dbReference>
<dbReference type="SUPFAM" id="SSF88659">
    <property type="entry name" value="Sigma3 and sigma4 domains of RNA polymerase sigma factors"/>
    <property type="match status" value="1"/>
</dbReference>
<dbReference type="PROSITE" id="PS00715">
    <property type="entry name" value="SIGMA70_1"/>
    <property type="match status" value="1"/>
</dbReference>
<dbReference type="PROSITE" id="PS00716">
    <property type="entry name" value="SIGMA70_2"/>
    <property type="match status" value="1"/>
</dbReference>
<name>RPSE_BACSU</name>
<gene>
    <name type="primary">sigE</name>
    <name type="synonym">spoIIGB</name>
    <name type="ordered locus">BSU15320</name>
</gene>
<keyword id="KW-0002">3D-structure</keyword>
<keyword id="KW-0903">Direct protein sequencing</keyword>
<keyword id="KW-0238">DNA-binding</keyword>
<keyword id="KW-1185">Reference proteome</keyword>
<keyword id="KW-0731">Sigma factor</keyword>
<keyword id="KW-0749">Sporulation</keyword>
<keyword id="KW-0804">Transcription</keyword>
<keyword id="KW-0805">Transcription regulation</keyword>
<accession>P06222</accession>
<accession>P15810</accession>
<accession>Q59252</accession>